<reference key="1">
    <citation type="journal article" date="2001" name="Mol. Biol. Evol.">
        <title>Mechanisms for evolving hypervariability: the case of conopeptides.</title>
        <authorList>
            <person name="Conticello S.G."/>
            <person name="Gilad Y."/>
            <person name="Avidan N."/>
            <person name="Ben-Asher E."/>
            <person name="Levy Z."/>
            <person name="Fainzilber M."/>
        </authorList>
    </citation>
    <scope>NUCLEOTIDE SEQUENCE [MRNA]</scope>
</reference>
<reference key="2">
    <citation type="journal article" date="1994" name="Biochemistry">
        <title>New mollusc-specific alpha-conotoxins block Aplysia neuronal acetylcholine receptors.</title>
        <authorList>
            <person name="Fainzilber M."/>
            <person name="Hasson A."/>
            <person name="Oren R."/>
            <person name="Burlingame A.L."/>
            <person name="Gordon D."/>
            <person name="Spira M.E."/>
            <person name="Zlotkin E."/>
        </authorList>
    </citation>
    <scope>PROTEIN SEQUENCE OF 45-60</scope>
    <scope>AMIDATION AT CYS-60</scope>
    <scope>SUBCELLULAR LOCATION</scope>
    <source>
        <tissue>Venom</tissue>
    </source>
</reference>
<reference key="3">
    <citation type="journal article" date="1999" name="Biochemistry">
        <title>Single-residue alteration in alpha-conotoxin PnIA switches its nAChR subtype selectivity.</title>
        <authorList>
            <person name="Luo S."/>
            <person name="Nguyen T.A."/>
            <person name="Cartier G.E."/>
            <person name="Olivera B.M."/>
            <person name="Yoshikami D."/>
            <person name="McIntosh J.M."/>
        </authorList>
    </citation>
    <scope>FUNCTION</scope>
    <scope>SYNTHESIS OF 45-60</scope>
    <scope>MUTAGENESIS OF LEU-54 AND SER-55</scope>
</reference>
<reference key="4">
    <citation type="journal article" date="1999" name="J. Mass Spectrom.">
        <title>Identification of tyrosine sulfation in Conus pennaceus conotoxins alpha-PnIA and alpha-PnIB: further investigation of labile sulfo- and phosphopeptides by electrospray, matrix-assisted laser desorption/ionization (MALDI) and atmospheric pressure MALDI mass spectrometry.</title>
        <authorList>
            <person name="Wolfender J.L."/>
            <person name="Chu F."/>
            <person name="Ball H."/>
            <person name="Wolfender F."/>
            <person name="Fainzilber M."/>
            <person name="Baldwin M.A."/>
            <person name="Burlingame A.L."/>
        </authorList>
    </citation>
    <scope>SULFATION AT TYR-59</scope>
</reference>
<reference key="5">
    <citation type="journal article" date="1997" name="Biochemistry">
        <title>Crystal structure at 1.1-A resolution of alpha-conotoxin PnIB: comparison with alpha-conotoxins PnIA and GI.</title>
        <authorList>
            <person name="Hu S.H."/>
            <person name="Gehrmann J."/>
            <person name="Alewood P.F."/>
            <person name="Craik D.J."/>
            <person name="Martin J.L."/>
        </authorList>
    </citation>
    <scope>X-RAY CRYSTALLOGRAPHY (1.1 ANGSTROMS) OF 45-60</scope>
    <scope>DISULFIDE BONDS</scope>
</reference>
<accession>P50985</accession>
<accession>Q9BP57</accession>
<evidence type="ECO:0000250" key="1">
    <source>
        <dbReference type="UniProtKB" id="P56636"/>
    </source>
</evidence>
<evidence type="ECO:0000255" key="2"/>
<evidence type="ECO:0000269" key="3">
    <source>
    </source>
</evidence>
<evidence type="ECO:0000269" key="4">
    <source>
    </source>
</evidence>
<evidence type="ECO:0000269" key="5">
    <source>
    </source>
</evidence>
<evidence type="ECO:0000269" key="6">
    <source>
    </source>
</evidence>
<evidence type="ECO:0000303" key="7">
    <source>
    </source>
</evidence>
<evidence type="ECO:0000303" key="8">
    <source>
    </source>
</evidence>
<evidence type="ECO:0000303" key="9">
    <source>
    </source>
</evidence>
<evidence type="ECO:0000303" key="10">
    <source>
    </source>
</evidence>
<evidence type="ECO:0000305" key="11"/>
<evidence type="ECO:0000305" key="12">
    <source>
    </source>
</evidence>
<evidence type="ECO:0000305" key="13">
    <source>
    </source>
</evidence>
<evidence type="ECO:0007829" key="14">
    <source>
        <dbReference type="PDB" id="1AKG"/>
    </source>
</evidence>
<proteinExistence type="evidence at protein level"/>
<keyword id="KW-0002">3D-structure</keyword>
<keyword id="KW-0008">Acetylcholine receptor inhibiting toxin</keyword>
<keyword id="KW-0027">Amidation</keyword>
<keyword id="KW-0903">Direct protein sequencing</keyword>
<keyword id="KW-1015">Disulfide bond</keyword>
<keyword id="KW-0872">Ion channel impairing toxin</keyword>
<keyword id="KW-0528">Neurotoxin</keyword>
<keyword id="KW-0629">Postsynaptic neurotoxin</keyword>
<keyword id="KW-0964">Secreted</keyword>
<keyword id="KW-0732">Signal</keyword>
<keyword id="KW-0765">Sulfation</keyword>
<keyword id="KW-0800">Toxin</keyword>
<organism>
    <name type="scientific">Conus pennaceus</name>
    <name type="common">Feathered cone</name>
    <name type="synonym">Conus episcopus</name>
    <dbReference type="NCBI Taxonomy" id="37335"/>
    <lineage>
        <taxon>Eukaryota</taxon>
        <taxon>Metazoa</taxon>
        <taxon>Spiralia</taxon>
        <taxon>Lophotrochozoa</taxon>
        <taxon>Mollusca</taxon>
        <taxon>Gastropoda</taxon>
        <taxon>Caenogastropoda</taxon>
        <taxon>Neogastropoda</taxon>
        <taxon>Conoidea</taxon>
        <taxon>Conidae</taxon>
        <taxon>Conus</taxon>
        <taxon>Darioconus</taxon>
    </lineage>
</organism>
<feature type="signal peptide" evidence="2">
    <location>
        <begin position="1"/>
        <end position="21"/>
    </location>
</feature>
<feature type="propeptide" id="PRO_0000034883" evidence="5">
    <location>
        <begin position="22"/>
        <end position="44"/>
    </location>
</feature>
<feature type="peptide" id="PRO_0000034884" description="Alpha-conotoxin PnIB" evidence="5">
    <location>
        <begin position="45"/>
        <end position="60"/>
    </location>
</feature>
<feature type="region of interest" description="Ser-Xaa-Pro motif, crucial for potent interaction with nAChR" evidence="1">
    <location>
        <begin position="48"/>
        <end position="50"/>
    </location>
</feature>
<feature type="site" description="Important in inhibition of nAChR alpha-7 subunit" evidence="12">
    <location>
        <position position="54"/>
    </location>
</feature>
<feature type="modified residue" description="Sulfotyrosine" evidence="3">
    <location>
        <position position="59"/>
    </location>
</feature>
<feature type="modified residue" description="Cysteine amide" evidence="5">
    <location>
        <position position="60"/>
    </location>
</feature>
<feature type="disulfide bond" evidence="6">
    <location>
        <begin position="46"/>
        <end position="52"/>
    </location>
</feature>
<feature type="disulfide bond" evidence="6">
    <location>
        <begin position="47"/>
        <end position="60"/>
    </location>
</feature>
<feature type="mutagenesis site" description="28-fold decrease in inhibition potency of nAChr alpha-7 subunits and 8-fold increase in inhibition potency of nAChr alpha-3-beta-2 subunits." evidence="4">
    <original>L</original>
    <variation>A</variation>
    <location>
        <position position="54"/>
    </location>
</feature>
<feature type="mutagenesis site" description="5-fold increase in inhibition potency of nAChr alpha-7 subunits and 20-fold increase in inhibition potency of nAChr alpha-3-beta-2 subunits." evidence="4">
    <original>S</original>
    <variation>N</variation>
    <location>
        <position position="55"/>
    </location>
</feature>
<feature type="helix" evidence="14">
    <location>
        <begin position="46"/>
        <end position="48"/>
    </location>
</feature>
<feature type="helix" evidence="14">
    <location>
        <begin position="50"/>
        <end position="55"/>
    </location>
</feature>
<feature type="turn" evidence="14">
    <location>
        <begin position="57"/>
        <end position="59"/>
    </location>
</feature>
<dbReference type="EMBL" id="AF215088">
    <property type="protein sequence ID" value="AAG60509.1"/>
    <property type="molecule type" value="mRNA"/>
</dbReference>
<dbReference type="PIR" id="B54877">
    <property type="entry name" value="B54877"/>
</dbReference>
<dbReference type="PDB" id="1AKG">
    <property type="method" value="X-ray"/>
    <property type="resolution" value="1.10 A"/>
    <property type="chains" value="A=45-60"/>
</dbReference>
<dbReference type="PDBsum" id="1AKG"/>
<dbReference type="SMR" id="P50985"/>
<dbReference type="ConoServer" id="36">
    <property type="toxin name" value="PnIB precursor"/>
</dbReference>
<dbReference type="EvolutionaryTrace" id="P50985"/>
<dbReference type="GO" id="GO:0005576">
    <property type="term" value="C:extracellular region"/>
    <property type="evidence" value="ECO:0007669"/>
    <property type="project" value="UniProtKB-SubCell"/>
</dbReference>
<dbReference type="GO" id="GO:0035792">
    <property type="term" value="C:host cell postsynaptic membrane"/>
    <property type="evidence" value="ECO:0007669"/>
    <property type="project" value="UniProtKB-KW"/>
</dbReference>
<dbReference type="GO" id="GO:0030550">
    <property type="term" value="F:acetylcholine receptor inhibitor activity"/>
    <property type="evidence" value="ECO:0007669"/>
    <property type="project" value="UniProtKB-KW"/>
</dbReference>
<dbReference type="GO" id="GO:0099106">
    <property type="term" value="F:ion channel regulator activity"/>
    <property type="evidence" value="ECO:0007669"/>
    <property type="project" value="UniProtKB-KW"/>
</dbReference>
<dbReference type="GO" id="GO:0090729">
    <property type="term" value="F:toxin activity"/>
    <property type="evidence" value="ECO:0007669"/>
    <property type="project" value="UniProtKB-KW"/>
</dbReference>
<dbReference type="InterPro" id="IPR009958">
    <property type="entry name" value="Conotoxin_a-typ"/>
</dbReference>
<dbReference type="InterPro" id="IPR018072">
    <property type="entry name" value="Conotoxin_a-typ_CS"/>
</dbReference>
<dbReference type="Pfam" id="PF07365">
    <property type="entry name" value="Toxin_8"/>
    <property type="match status" value="1"/>
</dbReference>
<dbReference type="PROSITE" id="PS60014">
    <property type="entry name" value="ALPHA_CONOTOXIN"/>
    <property type="match status" value="1"/>
</dbReference>
<comment type="function">
    <text evidence="4">Alpha-conotoxins act on postsynaptic membranes, they bind to the nicotinic acetylcholine receptors (nAChR) and thus inhibit them. This toxin blocks mammalian nAChRs (alpha-7/CHRNA7 &gt; alpha-3-beta-2/CHRNA3-CHRNB2).</text>
</comment>
<comment type="subcellular location">
    <subcellularLocation>
        <location evidence="5">Secreted</location>
    </subcellularLocation>
</comment>
<comment type="tissue specificity">
    <text evidence="13">Expressed by the venom duct.</text>
</comment>
<comment type="domain">
    <text>The cysteine framework is I (CC-C-C). Alpha4/7 pattern.</text>
</comment>
<comment type="similarity">
    <text evidence="11">Belongs to the conotoxin A superfamily.</text>
</comment>
<sequence length="61" mass="6363">MGMRMMFTVFLLVVLATTVVSFTSDRASDDGNAAASDLIALTIKGCCSLPPCALSNPDYCG</sequence>
<name>CA1B_CONPE</name>
<protein>
    <recommendedName>
        <fullName evidence="7 8 9 10">Alpha-conotoxin PnIB</fullName>
    </recommendedName>
</protein>